<reference key="1">
    <citation type="journal article" date="1993" name="EMBO J.">
        <title>Purification of NSP1 reveals complex formation with 'GLFG' nucleoporins and a novel nuclear pore protein NIC96.</title>
        <authorList>
            <person name="Grandi P."/>
            <person name="Doye V."/>
            <person name="Hurt E.C."/>
        </authorList>
    </citation>
    <scope>NUCLEOTIDE SEQUENCE [GENOMIC DNA]</scope>
    <scope>PARTIAL PROTEIN SEQUENCE</scope>
</reference>
<reference key="2">
    <citation type="journal article" date="1995" name="Nat. Genet.">
        <title>Analysis of the nucleotide sequence of chromosome VI from Saccharomyces cerevisiae.</title>
        <authorList>
            <person name="Murakami Y."/>
            <person name="Naitou M."/>
            <person name="Hagiwara H."/>
            <person name="Shibata T."/>
            <person name="Ozawa M."/>
            <person name="Sasanuma S."/>
            <person name="Sasanuma M."/>
            <person name="Tsuchiya Y."/>
            <person name="Soeda E."/>
            <person name="Yokoyama K."/>
            <person name="Yamazaki M."/>
            <person name="Tashiro H."/>
            <person name="Eki T."/>
        </authorList>
    </citation>
    <scope>NUCLEOTIDE SEQUENCE [LARGE SCALE GENOMIC DNA]</scope>
    <source>
        <strain>ATCC 204508 / S288c</strain>
    </source>
</reference>
<reference key="3">
    <citation type="journal article" date="2014" name="G3 (Bethesda)">
        <title>The reference genome sequence of Saccharomyces cerevisiae: Then and now.</title>
        <authorList>
            <person name="Engel S.R."/>
            <person name="Dietrich F.S."/>
            <person name="Fisk D.G."/>
            <person name="Binkley G."/>
            <person name="Balakrishnan R."/>
            <person name="Costanzo M.C."/>
            <person name="Dwight S.S."/>
            <person name="Hitz B.C."/>
            <person name="Karra K."/>
            <person name="Nash R.S."/>
            <person name="Weng S."/>
            <person name="Wong E.D."/>
            <person name="Lloyd P."/>
            <person name="Skrzypek M.S."/>
            <person name="Miyasato S.R."/>
            <person name="Simison M."/>
            <person name="Cherry J.M."/>
        </authorList>
    </citation>
    <scope>GENOME REANNOTATION</scope>
    <source>
        <strain>ATCC 204508 / S288c</strain>
    </source>
</reference>
<reference key="4">
    <citation type="journal article" date="1996" name="Yeast">
        <title>Sequencing of a 23 kb fragment from Saccharomyces cerevisiae chromosome VI.</title>
        <authorList>
            <person name="Naitou M."/>
            <person name="Ozawa M."/>
            <person name="Sasanuma S."/>
            <person name="Kobayashi M."/>
            <person name="Hagiwara H."/>
            <person name="Shibata T."/>
            <person name="Hanaoka F."/>
            <person name="Watanabe K."/>
            <person name="Ono A."/>
            <person name="Yamazaki M."/>
            <person name="Tashiro H."/>
            <person name="Eki T."/>
            <person name="Murakami Y."/>
        </authorList>
    </citation>
    <scope>NUCLEOTIDE SEQUENCE [GENOMIC DNA] OF 1-591</scope>
    <source>
        <strain>ATCC 204511 / S288c / AB972</strain>
    </source>
</reference>
<reference key="5">
    <citation type="journal article" date="1995" name="J. Cell Biol.">
        <title>Two novel related yeast nucleoporins Nup170p and Nup157p: complementation with the vertebrate homologue Nup155p and functional interactions with the yeast nuclear pore-membrane protein Pom152p.</title>
        <authorList>
            <person name="Aitchison J.D."/>
            <person name="Rout M.P."/>
            <person name="Marelli M."/>
            <person name="Blobel G."/>
            <person name="Wozniak R.W."/>
        </authorList>
    </citation>
    <scope>PROTEIN SEQUENCE OF 104-116 AND 277-291</scope>
</reference>
<reference key="6">
    <citation type="journal article" date="1995" name="EMBO J.">
        <title>Functional interaction of Nic96p with a core nucleoporin complex consisting of Nsp1p, Nup49p and a novel protein Nup57p.</title>
        <authorList>
            <person name="Grandi P."/>
            <person name="Schlaich N.L."/>
            <person name="Tekotte H."/>
            <person name="Hurt E.C."/>
        </authorList>
    </citation>
    <scope>FUNCTION</scope>
    <scope>HEPTAD REPEAT DEPENDENT INTERACTION WITH NSP1</scope>
</reference>
<reference key="7">
    <citation type="journal article" date="1996" name="J. Cell Biol.">
        <title>Nic96p is required for nuclear pore formation and functionally interacts with a novel nucleoporin, Nup188p.</title>
        <authorList>
            <person name="Zabel U."/>
            <person name="Doye V."/>
            <person name="Tekotte H."/>
            <person name="Wepf R."/>
            <person name="Grandi P."/>
            <person name="Hurt E.C."/>
        </authorList>
    </citation>
    <scope>INTERACTION WITH NUP188</scope>
</reference>
<reference key="8">
    <citation type="journal article" date="1996" name="J. Cell Biol.">
        <title>The yeast nucleoporin Nup188p interacts genetically and physically with the core structures of the nuclear pore complex.</title>
        <authorList>
            <person name="Nehrbass U."/>
            <person name="Rout M.P."/>
            <person name="Maguire S."/>
            <person name="Blobel G."/>
            <person name="Wozniak R.W."/>
        </authorList>
    </citation>
    <scope>FUNCTION</scope>
    <scope>INTERACTION WITH NUP188</scope>
</reference>
<reference key="9">
    <citation type="journal article" date="1997" name="Mol. Biol. Cell">
        <title>In vitro reconstitution of a heterotrimeric nucleoporin complex consisting of recombinant Nsp1p, Nup49p, and Nup57p.</title>
        <authorList>
            <person name="Schlaich N.L."/>
            <person name="Haener M."/>
            <person name="Lustig A."/>
            <person name="Aebi U."/>
            <person name="Hurt E.C."/>
        </authorList>
    </citation>
    <scope>FUNCTION</scope>
    <scope>INTERACTION WITH NUP57 SUBCOMPLEX</scope>
</reference>
<reference key="10">
    <citation type="journal article" date="1999" name="J. Biol. Chem.">
        <title>Nup192p is a conserved nucleoporin with a preferential location at the inner site of the nuclear membrane.</title>
        <authorList>
            <person name="Kosova B."/>
            <person name="Pante N."/>
            <person name="Rollenhagen C."/>
            <person name="Hurt E.C."/>
        </authorList>
    </citation>
    <scope>FUNCTION</scope>
    <scope>INTERACTION WITH NUP192</scope>
</reference>
<reference key="11">
    <citation type="journal article" date="2000" name="J. Biol. Chem.">
        <title>Mlp2p, a component of nuclear pore attached intranuclear filaments, associates with nic96p.</title>
        <authorList>
            <person name="Kosova B."/>
            <person name="Pante N."/>
            <person name="Rollenhagen C."/>
            <person name="Podtelejnikov A."/>
            <person name="Mann M."/>
            <person name="Aebi U."/>
            <person name="Hurt E.C."/>
        </authorList>
    </citation>
    <scope>FUNCTION</scope>
    <scope>INTERACTION WITH MLP2</scope>
</reference>
<reference key="12">
    <citation type="journal article" date="2000" name="J. Cell Biol.">
        <title>The yeast nuclear pore complex: composition, architecture, and transport mechanism.</title>
        <authorList>
            <person name="Rout M.P."/>
            <person name="Aitchison J.D."/>
            <person name="Suprapto A."/>
            <person name="Hjertaas K."/>
            <person name="Zhao Y."/>
            <person name="Chait B.T."/>
        </authorList>
    </citation>
    <scope>FUNCTION</scope>
    <scope>IDENTIFICATION IN THE NUCLEAR PORE COMPLEX</scope>
    <scope>SUBCELLULAR LOCATION</scope>
</reference>
<reference key="13">
    <citation type="journal article" date="2000" name="J. Struct. Biol.">
        <title>Yeast nuclear pore complex assembly defects determined by nuclear envelope reconstruction.</title>
        <authorList>
            <person name="Gomez-Ospina N."/>
            <person name="Morgan G."/>
            <person name="Giddings T.H. Jr."/>
            <person name="Kosova B."/>
            <person name="Hurt E.C."/>
            <person name="Winey M."/>
        </authorList>
    </citation>
    <scope>FUNCTION</scope>
    <scope>NPC DE NOVO ASSEMBLY</scope>
</reference>
<reference key="14">
    <citation type="journal article" date="2000" name="J. Struct. Biol.">
        <title>Comparative spatial localization of protein-A-tagged and authentic yeast nuclear pore complex proteins by immunogold electron microscopy.</title>
        <authorList>
            <person name="Fahrenkrog B."/>
            <person name="Aris J.P."/>
            <person name="Hurt E.C."/>
            <person name="Pante N."/>
            <person name="Aebi U."/>
        </authorList>
    </citation>
    <scope>FUNCTION</scope>
    <scope>LOCATION WITHIN THE NPC</scope>
</reference>
<reference key="15">
    <citation type="journal article" date="2001" name="Mol. Cell. Biol.">
        <title>The Nsp1p carboxy-terminal domain is organized into functionally distinct coiled-coil regions required for assembly of nucleoporin subcomplexes and nucleocytoplasmic transport.</title>
        <authorList>
            <person name="Bailer S.M."/>
            <person name="Balduf C."/>
            <person name="Hurt E.C."/>
        </authorList>
    </citation>
    <scope>FUNCTION</scope>
    <scope>INTERACTION WITH NSP1 COILED-COIL DOMAIN</scope>
</reference>
<reference key="16">
    <citation type="journal article" date="2002" name="J. Cell Biol.">
        <title>Karyopherins in nuclear pore biogenesis: a role for Kap121p in the assembly of Nup53p into nuclear pore complexes.</title>
        <authorList>
            <person name="Lusk C.P."/>
            <person name="Makhnevych T."/>
            <person name="Marelli M."/>
            <person name="Aitchison J.D."/>
            <person name="Wozniak R.W."/>
        </authorList>
    </citation>
    <scope>FUNCTION</scope>
    <scope>INTERACTION WITH NUP53</scope>
</reference>
<reference key="17">
    <citation type="journal article" date="2002" name="Biophys. J.">
        <title>In situ analysis of spatial relationships between proteins of the nuclear pore complex.</title>
        <authorList>
            <person name="Damelin M."/>
            <person name="Silver P.A."/>
        </authorList>
    </citation>
    <scope>FUNCTION</scope>
    <scope>INTERACTION WITH NUP53 AND NUP120</scope>
</reference>
<reference key="18">
    <citation type="journal article" date="2003" name="J. Biol. Chem.">
        <title>Nuclear accumulation of the small GTPase Gsp1p depends on nucleoporins Nup133p, Rat2p/Nup120p, Nup85p, Nic96p, and the acetyl-CoA carboxylase Acc1p.</title>
        <authorList>
            <person name="Gao H."/>
            <person name="Sumanaweera N."/>
            <person name="Bailer S.M."/>
            <person name="Stochaj U."/>
        </authorList>
    </citation>
    <scope>FUNCTION</scope>
    <scope>NUCLEAR GSP1 IMPORT</scope>
</reference>
<reference key="19">
    <citation type="journal article" date="2003" name="Nature">
        <title>Global analysis of protein expression in yeast.</title>
        <authorList>
            <person name="Ghaemmaghami S."/>
            <person name="Huh W.-K."/>
            <person name="Bower K."/>
            <person name="Howson R.W."/>
            <person name="Belle A."/>
            <person name="Dephoure N."/>
            <person name="O'Shea E.K."/>
            <person name="Weissman J.S."/>
        </authorList>
    </citation>
    <scope>LEVEL OF PROTEIN EXPRESSION [LARGE SCALE ANALYSIS]</scope>
</reference>
<reference key="20">
    <citation type="journal article" date="2003" name="Dev. Cell">
        <title>Peering through the pore: nuclear pore complex structure, assembly, and function.</title>
        <authorList>
            <person name="Suntharalingam M."/>
            <person name="Wente S.R."/>
        </authorList>
    </citation>
    <scope>REVIEW</scope>
</reference>
<reference key="21">
    <citation type="journal article" date="2008" name="Mol. Cell. Proteomics">
        <title>A multidimensional chromatography technology for in-depth phosphoproteome analysis.</title>
        <authorList>
            <person name="Albuquerque C.P."/>
            <person name="Smolka M.B."/>
            <person name="Payne S.H."/>
            <person name="Bafna V."/>
            <person name="Eng J."/>
            <person name="Zhou H."/>
        </authorList>
    </citation>
    <scope>IDENTIFICATION BY MASS SPECTROMETRY [LARGE SCALE ANALYSIS]</scope>
</reference>
<sequence>MLETLRGNKLHSGTSKGANKKLNELLESSDNLPSASSELGSIQVSINELRRRVFQLRSKNKASKDYTKAHYLLANSGLSFEDVDAFIKDLQTNQFLEPNPPKIIESEELEFYIRTKKEENILMSIEQLLNGATKDFDNFINHNLNLDWAQHKNEVMKNFGILIQDKKTVDHKKSISSLDPKLPSWGNKGNNILNSNESRLNVNENNILREKFENYARIVFQFNNSRQANGNFDIANEFISILSSANGTRNAQLLESWKILESMKSKDINIVEVGKQYLEQQFLQYTDNLYKKNMNEGLATNVNKIKSFIDTKLKKADKSWKISNLTVINGVPIWALIFYLLRAGLIKEALQVLVENKANIKKVEQSFLTYFKAYASSKDHGLPVEYSTKLHTEYNQHIKSSLDGDPYRLAVYKLIGRCDLSRKNIPAVTLSIEDWLWMHLMLIKEKDAENDPVYERYSLEDFQNIIISYGPSRFSNYYLQTLLLSGLYGLAIDYTYTFSEMDAVHLAIGLASLKLFKIDSSTRLTKKPKRDIRFANILANYTKSFRYSDPRVAVEYLVLITLNEGPTDVELCHEALRELVLETKEFTVLLGKIGRDGARIPGVIEERQPLLHVRDEKEFLHTITEQAARRADEDGRIYDSILLYQLAEEYDIVITLVNSLLSDTLSASDLDQPLVGPDDNSETNPVLLARRMASIYFDNAGISRQIHVKNKEICMLLLNISSIRELYFNKQWQETLSQMELLDLLPFSDELSARKKAQDFSNLDDNIVKNIPNLLIITLSCISNMIHILNESKYQSSTKGQQIDSLKNVARQCMIYAGMIQYRMPRETYSTLINIDVSL</sequence>
<proteinExistence type="evidence at protein level"/>
<organism>
    <name type="scientific">Saccharomyces cerevisiae (strain ATCC 204508 / S288c)</name>
    <name type="common">Baker's yeast</name>
    <dbReference type="NCBI Taxonomy" id="559292"/>
    <lineage>
        <taxon>Eukaryota</taxon>
        <taxon>Fungi</taxon>
        <taxon>Dikarya</taxon>
        <taxon>Ascomycota</taxon>
        <taxon>Saccharomycotina</taxon>
        <taxon>Saccharomycetes</taxon>
        <taxon>Saccharomycetales</taxon>
        <taxon>Saccharomycetaceae</taxon>
        <taxon>Saccharomyces</taxon>
    </lineage>
</organism>
<dbReference type="EMBL" id="X72923">
    <property type="protein sequence ID" value="CAA51427.1"/>
    <property type="molecule type" value="Genomic_DNA"/>
</dbReference>
<dbReference type="EMBL" id="D50617">
    <property type="protein sequence ID" value="BAA09241.1"/>
    <property type="molecule type" value="Genomic_DNA"/>
</dbReference>
<dbReference type="EMBL" id="BK006940">
    <property type="protein sequence ID" value="DAA12442.1"/>
    <property type="molecule type" value="Genomic_DNA"/>
</dbReference>
<dbReference type="PIR" id="S35319">
    <property type="entry name" value="S35319"/>
</dbReference>
<dbReference type="RefSeq" id="NP_116657.1">
    <property type="nucleotide sequence ID" value="NM_001179967.1"/>
</dbReference>
<dbReference type="PDB" id="2QX5">
    <property type="method" value="X-ray"/>
    <property type="resolution" value="2.50 A"/>
    <property type="chains" value="A/B=186-839"/>
</dbReference>
<dbReference type="PDB" id="2RFO">
    <property type="method" value="X-ray"/>
    <property type="resolution" value="2.60 A"/>
    <property type="chains" value="A/B=189-839"/>
</dbReference>
<dbReference type="PDB" id="6X07">
    <property type="method" value="X-ray"/>
    <property type="resolution" value="2.10 A"/>
    <property type="chains" value="A=186-839"/>
</dbReference>
<dbReference type="PDB" id="7N85">
    <property type="method" value="EM"/>
    <property type="resolution" value="7.60 A"/>
    <property type="chains" value="Q/R/S/T=1-839"/>
</dbReference>
<dbReference type="PDB" id="7N9F">
    <property type="method" value="EM"/>
    <property type="resolution" value="37.00 A"/>
    <property type="chains" value="Q/R/S/T=1-839"/>
</dbReference>
<dbReference type="PDB" id="7WOO">
    <property type="method" value="EM"/>
    <property type="resolution" value="3.71 A"/>
    <property type="chains" value="A/Z=1-839"/>
</dbReference>
<dbReference type="PDB" id="7WOT">
    <property type="method" value="EM"/>
    <property type="resolution" value="3.73 A"/>
    <property type="chains" value="A/M/N/Z=1-839"/>
</dbReference>
<dbReference type="PDB" id="8TJ5">
    <property type="method" value="EM"/>
    <property type="resolution" value="6.60 A"/>
    <property type="chains" value="Q/R/S/T=1-839"/>
</dbReference>
<dbReference type="PDBsum" id="2QX5"/>
<dbReference type="PDBsum" id="2RFO"/>
<dbReference type="PDBsum" id="6X07"/>
<dbReference type="PDBsum" id="7N85"/>
<dbReference type="PDBsum" id="7N9F"/>
<dbReference type="PDBsum" id="7WOO"/>
<dbReference type="PDBsum" id="7WOT"/>
<dbReference type="PDBsum" id="8TJ5"/>
<dbReference type="EMDB" id="EMD-24232"/>
<dbReference type="EMDB" id="EMD-24258"/>
<dbReference type="EMDB" id="EMD-32653"/>
<dbReference type="EMDB" id="EMD-32658"/>
<dbReference type="EMDB" id="EMD-41300"/>
<dbReference type="SMR" id="P34077"/>
<dbReference type="BioGRID" id="31150">
    <property type="interactions" value="99"/>
</dbReference>
<dbReference type="ComplexPortal" id="CPX-824">
    <property type="entry name" value="Nuclear pore complex"/>
</dbReference>
<dbReference type="DIP" id="DIP-745N"/>
<dbReference type="FunCoup" id="P34077">
    <property type="interactions" value="1365"/>
</dbReference>
<dbReference type="IntAct" id="P34077">
    <property type="interactions" value="39"/>
</dbReference>
<dbReference type="MINT" id="P34077"/>
<dbReference type="STRING" id="4932.YFR002W"/>
<dbReference type="TCDB" id="1.I.1.1.1">
    <property type="family name" value="the nuclear pore complex (npc) family"/>
</dbReference>
<dbReference type="GlyGen" id="P34077">
    <property type="glycosylation" value="1 site"/>
</dbReference>
<dbReference type="iPTMnet" id="P34077"/>
<dbReference type="PaxDb" id="4932-YFR002W"/>
<dbReference type="PeptideAtlas" id="P34077"/>
<dbReference type="EnsemblFungi" id="YFR002W_mRNA">
    <property type="protein sequence ID" value="YFR002W"/>
    <property type="gene ID" value="YFR002W"/>
</dbReference>
<dbReference type="GeneID" id="850552"/>
<dbReference type="KEGG" id="sce:YFR002W"/>
<dbReference type="AGR" id="SGD:S000001898"/>
<dbReference type="SGD" id="S000001898">
    <property type="gene designation" value="NIC96"/>
</dbReference>
<dbReference type="VEuPathDB" id="FungiDB:YFR002W"/>
<dbReference type="eggNOG" id="KOG2168">
    <property type="taxonomic scope" value="Eukaryota"/>
</dbReference>
<dbReference type="GeneTree" id="ENSGT00390000016353"/>
<dbReference type="HOGENOM" id="CLU_011846_0_0_1"/>
<dbReference type="InParanoid" id="P34077"/>
<dbReference type="OMA" id="LLMCGQF"/>
<dbReference type="OrthoDB" id="1918363at2759"/>
<dbReference type="BioCyc" id="YEAST:G3O-30455-MONOMER"/>
<dbReference type="Reactome" id="R-SCE-159236">
    <property type="pathway name" value="Transport of Mature mRNA derived from an Intron-Containing Transcript"/>
</dbReference>
<dbReference type="Reactome" id="R-SCE-3371453">
    <property type="pathway name" value="Regulation of HSF1-mediated heat shock response"/>
</dbReference>
<dbReference type="Reactome" id="R-SCE-4085377">
    <property type="pathway name" value="SUMOylation of SUMOylation proteins"/>
</dbReference>
<dbReference type="Reactome" id="R-SCE-4551638">
    <property type="pathway name" value="SUMOylation of chromatin organization proteins"/>
</dbReference>
<dbReference type="Reactome" id="R-SCE-4570464">
    <property type="pathway name" value="SUMOylation of RNA binding proteins"/>
</dbReference>
<dbReference type="BioGRID-ORCS" id="850552">
    <property type="hits" value="1 hit in 10 CRISPR screens"/>
</dbReference>
<dbReference type="EvolutionaryTrace" id="P34077"/>
<dbReference type="PRO" id="PR:P34077"/>
<dbReference type="Proteomes" id="UP000002311">
    <property type="component" value="Chromosome VI"/>
</dbReference>
<dbReference type="RNAct" id="P34077">
    <property type="molecule type" value="protein"/>
</dbReference>
<dbReference type="GO" id="GO:0005635">
    <property type="term" value="C:nuclear envelope"/>
    <property type="evidence" value="ECO:0000303"/>
    <property type="project" value="ComplexPortal"/>
</dbReference>
<dbReference type="GO" id="GO:0031965">
    <property type="term" value="C:nuclear membrane"/>
    <property type="evidence" value="ECO:0007669"/>
    <property type="project" value="UniProtKB-SubCell"/>
</dbReference>
<dbReference type="GO" id="GO:0005643">
    <property type="term" value="C:nuclear pore"/>
    <property type="evidence" value="ECO:0000314"/>
    <property type="project" value="SGD"/>
</dbReference>
<dbReference type="GO" id="GO:0044612">
    <property type="term" value="C:nuclear pore linkers"/>
    <property type="evidence" value="ECO:0000314"/>
    <property type="project" value="SGD"/>
</dbReference>
<dbReference type="GO" id="GO:0044615">
    <property type="term" value="C:nuclear pore nuclear basket"/>
    <property type="evidence" value="ECO:0000314"/>
    <property type="project" value="SGD"/>
</dbReference>
<dbReference type="GO" id="GO:0017056">
    <property type="term" value="F:structural constituent of nuclear pore"/>
    <property type="evidence" value="ECO:0000315"/>
    <property type="project" value="SGD"/>
</dbReference>
<dbReference type="GO" id="GO:0006999">
    <property type="term" value="P:nuclear pore organization"/>
    <property type="evidence" value="ECO:0000315"/>
    <property type="project" value="SGD"/>
</dbReference>
<dbReference type="GO" id="GO:0006913">
    <property type="term" value="P:nucleocytoplasmic transport"/>
    <property type="evidence" value="ECO:0000303"/>
    <property type="project" value="ComplexPortal"/>
</dbReference>
<dbReference type="GO" id="GO:0016973">
    <property type="term" value="P:poly(A)+ mRNA export from nucleus"/>
    <property type="evidence" value="ECO:0000318"/>
    <property type="project" value="GO_Central"/>
</dbReference>
<dbReference type="GO" id="GO:0006606">
    <property type="term" value="P:protein import into nucleus"/>
    <property type="evidence" value="ECO:0000315"/>
    <property type="project" value="SGD"/>
</dbReference>
<dbReference type="GO" id="GO:0000055">
    <property type="term" value="P:ribosomal large subunit export from nucleus"/>
    <property type="evidence" value="ECO:0000315"/>
    <property type="project" value="SGD"/>
</dbReference>
<dbReference type="InterPro" id="IPR007231">
    <property type="entry name" value="Nucleoporin_int_Nup93/Nic96"/>
</dbReference>
<dbReference type="PANTHER" id="PTHR11225:SF4">
    <property type="entry name" value="NUCLEAR PORE COMPLEX PROTEIN NUP93"/>
    <property type="match status" value="1"/>
</dbReference>
<dbReference type="PANTHER" id="PTHR11225">
    <property type="entry name" value="NUCLEAR PORE COMPLEX PROTEIN NUP93 NUCLEOPORIN NUP93 DEAD EYE PROTEIN"/>
    <property type="match status" value="1"/>
</dbReference>
<dbReference type="Pfam" id="PF04097">
    <property type="entry name" value="Nic96"/>
    <property type="match status" value="1"/>
</dbReference>
<gene>
    <name type="primary">NIC96</name>
    <name type="ordered locus">YFR002W</name>
</gene>
<evidence type="ECO:0000269" key="1">
    <source>
    </source>
</evidence>
<evidence type="ECO:0000269" key="2">
    <source>
    </source>
</evidence>
<evidence type="ECO:0000269" key="3">
    <source>
    </source>
</evidence>
<evidence type="ECO:0000269" key="4">
    <source>
    </source>
</evidence>
<evidence type="ECO:0000269" key="5">
    <source>
    </source>
</evidence>
<evidence type="ECO:0000269" key="6">
    <source>
    </source>
</evidence>
<evidence type="ECO:0000269" key="7">
    <source>
    </source>
</evidence>
<evidence type="ECO:0000269" key="8">
    <source>
    </source>
</evidence>
<evidence type="ECO:0000269" key="9">
    <source>
    </source>
</evidence>
<evidence type="ECO:0000269" key="10">
    <source>
    </source>
</evidence>
<evidence type="ECO:0000269" key="11">
    <source>
    </source>
</evidence>
<evidence type="ECO:0000269" key="12">
    <source>
    </source>
</evidence>
<evidence type="ECO:0000269" key="13">
    <source>
    </source>
</evidence>
<evidence type="ECO:0000269" key="14">
    <source>
    </source>
</evidence>
<evidence type="ECO:0000305" key="15"/>
<evidence type="ECO:0007829" key="16">
    <source>
        <dbReference type="PDB" id="2QX5"/>
    </source>
</evidence>
<evidence type="ECO:0007829" key="17">
    <source>
        <dbReference type="PDB" id="2RFO"/>
    </source>
</evidence>
<evidence type="ECO:0007829" key="18">
    <source>
        <dbReference type="PDB" id="6X07"/>
    </source>
</evidence>
<comment type="function">
    <text evidence="1 2 3 4 5 6 7 8 9 11 13 14">Functions as a component of the nuclear pore complex (NPC). NPC components, collectively referred to as nucleoporins (NUPs), can play the role of both NPC structural components and of docking or interaction partners for transiently associated nuclear transport factors. NIC96, which is localized to the core of the NPC and the distal ring of the nuclear basket, is required for de novo assembly of NPCs. It is involved in nuclear GSP1 import.</text>
</comment>
<comment type="subunit">
    <text evidence="1 2 3 6 7 8 12 13 14">Component of the nuclear pore complex (NPC). NPC constitutes the exclusive means of nucleocytoplasmic transport. NPCs allow the passive diffusion of ions and small molecules and the active, nuclear transport receptor-mediated bidirectional transport of macromolecules such as proteins, RNAs, ribonucleoparticles (RNPs), and ribosomal subunits across the nuclear envelope. Due to its 8-fold rotational symmetry, all subunits are present with 8 copies or multiples thereof. NIC96 is part of three NPC subcomplexes, interacting with NSP1 of the NUP57 subcomplex (NIC96, NSP1, NUP49, NUP57), with NUP120 of the NUP84 subcomplex (SEH1, NUP85, NUP120, NUP145C, SEC13, NUP84, NUP133), and with NUP53 of the NUP53-NUP59-NUP170 subcomplex. The interaction with NUP53 is cell cycle dependent. NIC96 is also associated with the distal ring of the nuclear basket and interacts here with MLP2, which forms together with MLP1 nuclear pore-attached intranuclear filaments.</text>
</comment>
<comment type="interaction">
    <interactant intactId="EBI-12056">
        <id>P34077</id>
    </interactant>
    <interactant intactId="EBI-25846">
        <id>P47054</id>
        <label>NUP192</label>
    </interactant>
    <organismsDiffer>false</organismsDiffer>
    <experiments>3</experiments>
</comment>
<comment type="interaction">
    <interactant intactId="EBI-12056">
        <id>P34077</id>
    </interactant>
    <interactant intactId="EBI-12315">
        <id>Q02199</id>
        <label>NUP49</label>
    </interactant>
    <organismsDiffer>false</organismsDiffer>
    <experiments>4</experiments>
</comment>
<comment type="interaction">
    <interactant intactId="EBI-12056">
        <id>P34077</id>
    </interactant>
    <interactant intactId="EBI-27321">
        <id>Q03790</id>
        <label>NUP53</label>
    </interactant>
    <organismsDiffer>false</organismsDiffer>
    <experiments>3</experiments>
</comment>
<comment type="interaction">
    <interactant intactId="EBI-12056">
        <id>P34077</id>
    </interactant>
    <interactant intactId="EBI-12324">
        <id>P48837</id>
        <label>NUP57</label>
    </interactant>
    <organismsDiffer>false</organismsDiffer>
    <experiments>6</experiments>
</comment>
<comment type="subcellular location">
    <subcellularLocation>
        <location evidence="3">Nucleus</location>
        <location evidence="3">Nuclear pore complex</location>
    </subcellularLocation>
    <subcellularLocation>
        <location>Nucleus membrane</location>
        <topology>Peripheral membrane protein</topology>
        <orientation>Cytoplasmic side</orientation>
    </subcellularLocation>
    <subcellularLocation>
        <location>Nucleus membrane</location>
        <topology>Peripheral membrane protein</topology>
        <orientation>Nucleoplasmic side</orientation>
    </subcellularLocation>
    <text>Symmetric distribution.</text>
</comment>
<comment type="miscellaneous">
    <text evidence="10">Present with 15500 molecules/cell in log phase SD medium.</text>
</comment>
<comment type="similarity">
    <text evidence="15">Belongs to the nucleoporin interacting component (NIC) family.</text>
</comment>
<feature type="chain" id="PRO_0000124787" description="Nucleoporin NIC96">
    <location>
        <begin position="1"/>
        <end position="839"/>
    </location>
</feature>
<feature type="region of interest" description="Leucine zipper-like heptad repeat, required for interaction with NSP1">
    <location>
        <begin position="25"/>
        <end position="60"/>
    </location>
</feature>
<feature type="sequence conflict" description="In Ref. 1; CAA51427." evidence="15" ref="1">
    <location>
        <position position="59"/>
    </location>
</feature>
<feature type="helix" evidence="18">
    <location>
        <begin position="202"/>
        <end position="204"/>
    </location>
</feature>
<feature type="helix" evidence="18">
    <location>
        <begin position="206"/>
        <end position="228"/>
    </location>
</feature>
<feature type="helix" evidence="18">
    <location>
        <begin position="234"/>
        <end position="244"/>
    </location>
</feature>
<feature type="helix" evidence="18">
    <location>
        <begin position="248"/>
        <end position="263"/>
    </location>
</feature>
<feature type="helix" evidence="18">
    <location>
        <begin position="270"/>
        <end position="289"/>
    </location>
</feature>
<feature type="strand" evidence="17">
    <location>
        <begin position="291"/>
        <end position="293"/>
    </location>
</feature>
<feature type="helix" evidence="18">
    <location>
        <begin position="301"/>
        <end position="312"/>
    </location>
</feature>
<feature type="strand" evidence="16">
    <location>
        <begin position="316"/>
        <end position="318"/>
    </location>
</feature>
<feature type="strand" evidence="18">
    <location>
        <begin position="320"/>
        <end position="322"/>
    </location>
</feature>
<feature type="helix" evidence="18">
    <location>
        <begin position="333"/>
        <end position="342"/>
    </location>
</feature>
<feature type="helix" evidence="18">
    <location>
        <begin position="346"/>
        <end position="355"/>
    </location>
</feature>
<feature type="helix" evidence="18">
    <location>
        <begin position="357"/>
        <end position="359"/>
    </location>
</feature>
<feature type="turn" evidence="18">
    <location>
        <begin position="361"/>
        <end position="364"/>
    </location>
</feature>
<feature type="helix" evidence="18">
    <location>
        <begin position="365"/>
        <end position="375"/>
    </location>
</feature>
<feature type="strand" evidence="18">
    <location>
        <begin position="376"/>
        <end position="379"/>
    </location>
</feature>
<feature type="helix" evidence="18">
    <location>
        <begin position="384"/>
        <end position="397"/>
    </location>
</feature>
<feature type="turn" evidence="18">
    <location>
        <begin position="398"/>
        <end position="400"/>
    </location>
</feature>
<feature type="strand" evidence="17">
    <location>
        <begin position="402"/>
        <end position="404"/>
    </location>
</feature>
<feature type="helix" evidence="18">
    <location>
        <begin position="406"/>
        <end position="416"/>
    </location>
</feature>
<feature type="helix" evidence="16">
    <location>
        <begin position="420"/>
        <end position="422"/>
    </location>
</feature>
<feature type="helix" evidence="18">
    <location>
        <begin position="426"/>
        <end position="428"/>
    </location>
</feature>
<feature type="helix" evidence="18">
    <location>
        <begin position="432"/>
        <end position="442"/>
    </location>
</feature>
<feature type="helix" evidence="18">
    <location>
        <begin position="446"/>
        <end position="448"/>
    </location>
</feature>
<feature type="turn" evidence="18">
    <location>
        <begin position="452"/>
        <end position="454"/>
    </location>
</feature>
<feature type="helix" evidence="18">
    <location>
        <begin position="459"/>
        <end position="469"/>
    </location>
</feature>
<feature type="helix" evidence="18">
    <location>
        <begin position="471"/>
        <end position="473"/>
    </location>
</feature>
<feature type="helix" evidence="18">
    <location>
        <begin position="478"/>
        <end position="484"/>
    </location>
</feature>
<feature type="helix" evidence="18">
    <location>
        <begin position="488"/>
        <end position="496"/>
    </location>
</feature>
<feature type="helix" evidence="18">
    <location>
        <begin position="500"/>
        <end position="512"/>
    </location>
</feature>
<feature type="helix" evidence="18">
    <location>
        <begin position="534"/>
        <end position="541"/>
    </location>
</feature>
<feature type="helix" evidence="18">
    <location>
        <begin position="542"/>
        <end position="545"/>
    </location>
</feature>
<feature type="turn" evidence="18">
    <location>
        <begin position="546"/>
        <end position="548"/>
    </location>
</feature>
<feature type="helix" evidence="18">
    <location>
        <begin position="550"/>
        <end position="557"/>
    </location>
</feature>
<feature type="helix" evidence="18">
    <location>
        <begin position="558"/>
        <end position="562"/>
    </location>
</feature>
<feature type="helix" evidence="18">
    <location>
        <begin position="568"/>
        <end position="583"/>
    </location>
</feature>
<feature type="helix" evidence="18">
    <location>
        <begin position="586"/>
        <end position="590"/>
    </location>
</feature>
<feature type="strand" evidence="18">
    <location>
        <begin position="591"/>
        <end position="593"/>
    </location>
</feature>
<feature type="strand" evidence="17">
    <location>
        <begin position="595"/>
        <end position="597"/>
    </location>
</feature>
<feature type="strand" evidence="18">
    <location>
        <begin position="599"/>
        <end position="601"/>
    </location>
</feature>
<feature type="helix" evidence="18">
    <location>
        <begin position="603"/>
        <end position="606"/>
    </location>
</feature>
<feature type="helix" evidence="18">
    <location>
        <begin position="608"/>
        <end position="611"/>
    </location>
</feature>
<feature type="strand" evidence="17">
    <location>
        <begin position="615"/>
        <end position="617"/>
    </location>
</feature>
<feature type="helix" evidence="18">
    <location>
        <begin position="618"/>
        <end position="634"/>
    </location>
</feature>
<feature type="helix" evidence="18">
    <location>
        <begin position="637"/>
        <end position="646"/>
    </location>
</feature>
<feature type="helix" evidence="18">
    <location>
        <begin position="650"/>
        <end position="667"/>
    </location>
</feature>
<feature type="strand" evidence="17">
    <location>
        <begin position="675"/>
        <end position="679"/>
    </location>
</feature>
<feature type="turn" evidence="18">
    <location>
        <begin position="681"/>
        <end position="683"/>
    </location>
</feature>
<feature type="helix" evidence="18">
    <location>
        <begin position="685"/>
        <end position="696"/>
    </location>
</feature>
<feature type="helix" evidence="18">
    <location>
        <begin position="700"/>
        <end position="703"/>
    </location>
</feature>
<feature type="helix" evidence="18">
    <location>
        <begin position="708"/>
        <end position="728"/>
    </location>
</feature>
<feature type="helix" evidence="18">
    <location>
        <begin position="732"/>
        <end position="741"/>
    </location>
</feature>
<feature type="helix" evidence="18">
    <location>
        <begin position="750"/>
        <end position="760"/>
    </location>
</feature>
<feature type="strand" evidence="17">
    <location>
        <begin position="761"/>
        <end position="763"/>
    </location>
</feature>
<feature type="helix" evidence="18">
    <location>
        <begin position="765"/>
        <end position="768"/>
    </location>
</feature>
<feature type="helix" evidence="18">
    <location>
        <begin position="771"/>
        <end position="789"/>
    </location>
</feature>
<feature type="helix" evidence="18">
    <location>
        <begin position="799"/>
        <end position="820"/>
    </location>
</feature>
<feature type="helix" evidence="18">
    <location>
        <begin position="821"/>
        <end position="823"/>
    </location>
</feature>
<feature type="helix" evidence="18">
    <location>
        <begin position="828"/>
        <end position="836"/>
    </location>
</feature>
<accession>P34077</accession>
<accession>D6VTN2</accession>
<keyword id="KW-0002">3D-structure</keyword>
<keyword id="KW-0903">Direct protein sequencing</keyword>
<keyword id="KW-0472">Membrane</keyword>
<keyword id="KW-0509">mRNA transport</keyword>
<keyword id="KW-0906">Nuclear pore complex</keyword>
<keyword id="KW-0539">Nucleus</keyword>
<keyword id="KW-0653">Protein transport</keyword>
<keyword id="KW-1185">Reference proteome</keyword>
<keyword id="KW-0811">Translocation</keyword>
<keyword id="KW-0813">Transport</keyword>
<name>NIC96_YEAST</name>
<protein>
    <recommendedName>
        <fullName>Nucleoporin NIC96</fullName>
    </recommendedName>
    <alternativeName>
        <fullName>96 kDa nucleoporin-interacting component</fullName>
    </alternativeName>
    <alternativeName>
        <fullName>Nuclear pore protein NIC96</fullName>
    </alternativeName>
</protein>